<organism>
    <name type="scientific">Gallus gallus</name>
    <name type="common">Chicken</name>
    <dbReference type="NCBI Taxonomy" id="9031"/>
    <lineage>
        <taxon>Eukaryota</taxon>
        <taxon>Metazoa</taxon>
        <taxon>Chordata</taxon>
        <taxon>Craniata</taxon>
        <taxon>Vertebrata</taxon>
        <taxon>Euteleostomi</taxon>
        <taxon>Archelosauria</taxon>
        <taxon>Archosauria</taxon>
        <taxon>Dinosauria</taxon>
        <taxon>Saurischia</taxon>
        <taxon>Theropoda</taxon>
        <taxon>Coelurosauria</taxon>
        <taxon>Aves</taxon>
        <taxon>Neognathae</taxon>
        <taxon>Galloanserae</taxon>
        <taxon>Galliformes</taxon>
        <taxon>Phasianidae</taxon>
        <taxon>Phasianinae</taxon>
        <taxon>Gallus</taxon>
    </lineage>
</organism>
<gene>
    <name type="primary">GET4</name>
    <name type="ORF">RCJMB04_10o20</name>
</gene>
<reference key="1">
    <citation type="journal article" date="2005" name="Genome Biol.">
        <title>Full-length cDNAs from chicken bursal lymphocytes to facilitate gene function analysis.</title>
        <authorList>
            <person name="Caldwell R.B."/>
            <person name="Kierzek A.M."/>
            <person name="Arakawa H."/>
            <person name="Bezzubov Y."/>
            <person name="Zaim J."/>
            <person name="Fiedler P."/>
            <person name="Kutter S."/>
            <person name="Blagodatski A."/>
            <person name="Kostovska D."/>
            <person name="Koter M."/>
            <person name="Plachy J."/>
            <person name="Carninci P."/>
            <person name="Hayashizaki Y."/>
            <person name="Buerstedde J.-M."/>
        </authorList>
    </citation>
    <scope>NUCLEOTIDE SEQUENCE [LARGE SCALE MRNA]</scope>
    <source>
        <strain>CB</strain>
        <tissue>Bursa of Fabricius</tissue>
    </source>
</reference>
<feature type="chain" id="PRO_0000403720" description="Golgi to ER traffic protein 4 homolog">
    <location>
        <begin position="1"/>
        <end position="312"/>
    </location>
</feature>
<feature type="region of interest" description="Disordered" evidence="2">
    <location>
        <begin position="290"/>
        <end position="312"/>
    </location>
</feature>
<feature type="compositionally biased region" description="Acidic residues" evidence="2">
    <location>
        <begin position="294"/>
        <end position="304"/>
    </location>
</feature>
<sequence length="312" mass="34648">MAAAIMAAEQEAAKGGGRNRGGVQRVEGKLRASVEKGDYYEAHQMYRTLFFRYMSQGKYVEARELMYSGALLFFSHNQQNSAADLSMLVLESLEKSDAKVTDDLLENLAKLFSLMDPNSPERVAFVSRALKWSSGGSGKLGHPKLHQLLAITLWKDGEGCANMLVEYSSSRGYRSEVDMFVAQAVLQFLCLKNKTSASVVFTTYTQKHPSIEKGPPFVQPLLNFIWFLLLAVDGGKLTVFTVLCEQYQPSLKRDPMYNEYLDRIGQLFFGVPPKQTSSYGGLLGNLLNSLMGTGEDDDTEDGQEDSSPIELD</sequence>
<comment type="function">
    <text evidence="1">As part of a cytosolic protein quality control complex, the BAG6/BAT3 complex, maintains misfolded and hydrophobic patches-containing proteins in a soluble state and participates in their proper delivery to the endoplasmic reticulum or alternatively can promote their sorting to the proteasome where they undergo degradation. The BAG6/BAT3 complex is involved in the post-translational delivery of tail-anchored/type II transmembrane proteins to the endoplasmic reticulum membrane. Recruited to ribosomes, it interacts with the transmembrane region of newly synthesized tail-anchored proteins and together with SGTA and ASNA1 mediates their delivery to the endoplasmic reticulum. Client proteins that cannot be properly delivered to the endoplasmic reticulum are ubiquitinated and sorted to the proteasome. Similarly, the BAG6/BAT3 complex also functions as a sorting platform for proteins of the secretory pathway that are mislocalized to the cytosol either delivering them to the proteasome for degradation or to the endoplasmic reticulum. The BAG6/BAT3 complex also plays a role in the endoplasmic reticulum-associated degradation (ERAD), a quality control mechanism that eliminates unwanted proteins of the endoplasmic reticulum through their retrotranslocation to the cytosol and their targeting to the proteasome. It maintains these retrotranslocated proteins in an unfolded yet soluble state condition in the cytosol to ensure their proper delivery to the proteasome.</text>
</comment>
<comment type="subunit">
    <text evidence="1">Component of the BAG6/BAT3 complex.</text>
</comment>
<comment type="subcellular location">
    <subcellularLocation>
        <location evidence="1">Cytoplasm</location>
        <location evidence="1">Cytosol</location>
    </subcellularLocation>
</comment>
<comment type="similarity">
    <text evidence="3">Belongs to the GET4 family.</text>
</comment>
<evidence type="ECO:0000250" key="1">
    <source>
        <dbReference type="UniProtKB" id="Q7L5D6"/>
    </source>
</evidence>
<evidence type="ECO:0000256" key="2">
    <source>
        <dbReference type="SAM" id="MobiDB-lite"/>
    </source>
</evidence>
<evidence type="ECO:0000305" key="3"/>
<name>GET4_CHICK</name>
<keyword id="KW-0963">Cytoplasm</keyword>
<keyword id="KW-1185">Reference proteome</keyword>
<keyword id="KW-0813">Transport</keyword>
<proteinExistence type="evidence at transcript level"/>
<accession>Q5ZKG8</accession>
<dbReference type="EMBL" id="AJ720116">
    <property type="protein sequence ID" value="CAG31775.1"/>
    <property type="molecule type" value="mRNA"/>
</dbReference>
<dbReference type="RefSeq" id="NP_001006159.1">
    <property type="nucleotide sequence ID" value="NM_001006159.3"/>
</dbReference>
<dbReference type="SMR" id="Q5ZKG8"/>
<dbReference type="FunCoup" id="Q5ZKG8">
    <property type="interactions" value="2169"/>
</dbReference>
<dbReference type="STRING" id="9031.ENSGALP00000006013"/>
<dbReference type="PaxDb" id="9031-ENSGALP00000006013"/>
<dbReference type="GeneID" id="416450"/>
<dbReference type="KEGG" id="gga:416450"/>
<dbReference type="CTD" id="51608"/>
<dbReference type="VEuPathDB" id="HostDB:geneid_416450"/>
<dbReference type="eggNOG" id="KOG3024">
    <property type="taxonomic scope" value="Eukaryota"/>
</dbReference>
<dbReference type="HOGENOM" id="CLU_046061_2_0_1"/>
<dbReference type="InParanoid" id="Q5ZKG8"/>
<dbReference type="OrthoDB" id="10252405at2759"/>
<dbReference type="PhylomeDB" id="Q5ZKG8"/>
<dbReference type="PRO" id="PR:Q5ZKG8"/>
<dbReference type="Proteomes" id="UP000000539">
    <property type="component" value="Unassembled WGS sequence"/>
</dbReference>
<dbReference type="GO" id="GO:0071818">
    <property type="term" value="C:BAT3 complex"/>
    <property type="evidence" value="ECO:0000250"/>
    <property type="project" value="UniProtKB"/>
</dbReference>
<dbReference type="GO" id="GO:0005829">
    <property type="term" value="C:cytosol"/>
    <property type="evidence" value="ECO:0000250"/>
    <property type="project" value="UniProtKB"/>
</dbReference>
<dbReference type="GO" id="GO:0045048">
    <property type="term" value="P:protein insertion into ER membrane"/>
    <property type="evidence" value="ECO:0000250"/>
    <property type="project" value="UniProtKB"/>
</dbReference>
<dbReference type="GO" id="GO:0071816">
    <property type="term" value="P:tail-anchored membrane protein insertion into ER membrane"/>
    <property type="evidence" value="ECO:0000250"/>
    <property type="project" value="UniProtKB"/>
</dbReference>
<dbReference type="FunFam" id="1.25.40.10:FF:000060">
    <property type="entry name" value="Golgi to ER traffic protein 4 homolog"/>
    <property type="match status" value="1"/>
</dbReference>
<dbReference type="Gene3D" id="1.25.40.10">
    <property type="entry name" value="Tetratricopeptide repeat domain"/>
    <property type="match status" value="1"/>
</dbReference>
<dbReference type="InterPro" id="IPR007317">
    <property type="entry name" value="GET4"/>
</dbReference>
<dbReference type="InterPro" id="IPR011990">
    <property type="entry name" value="TPR-like_helical_dom_sf"/>
</dbReference>
<dbReference type="PANTHER" id="PTHR12875">
    <property type="entry name" value="GOLGI TO ER TRAFFIC PROTEIN 4 HOMOLOG"/>
    <property type="match status" value="1"/>
</dbReference>
<dbReference type="PANTHER" id="PTHR12875:SF0">
    <property type="entry name" value="GOLGI TO ER TRAFFIC PROTEIN 4 HOMOLOG"/>
    <property type="match status" value="1"/>
</dbReference>
<dbReference type="Pfam" id="PF04190">
    <property type="entry name" value="GET4"/>
    <property type="match status" value="1"/>
</dbReference>
<protein>
    <recommendedName>
        <fullName>Golgi to ER traffic protein 4 homolog</fullName>
    </recommendedName>
</protein>